<evidence type="ECO:0000250" key="1">
    <source>
        <dbReference type="UniProtKB" id="P40056"/>
    </source>
</evidence>
<evidence type="ECO:0000255" key="2">
    <source>
        <dbReference type="HAMAP-Rule" id="MF_03114"/>
    </source>
</evidence>
<evidence type="ECO:0000256" key="3">
    <source>
        <dbReference type="SAM" id="MobiDB-lite"/>
    </source>
</evidence>
<reference key="1">
    <citation type="submission" date="2005-03" db="EMBL/GenBank/DDBJ databases">
        <title>Annotation of the Saccharomyces cerevisiae RM11-1a genome.</title>
        <authorList>
            <consortium name="The Broad Institute Genome Sequencing Platform"/>
            <person name="Birren B.W."/>
            <person name="Lander E.S."/>
            <person name="Galagan J.E."/>
            <person name="Nusbaum C."/>
            <person name="Devon K."/>
            <person name="Cuomo C."/>
            <person name="Jaffe D.B."/>
            <person name="Butler J."/>
            <person name="Alvarez P."/>
            <person name="Gnerre S."/>
            <person name="Grabherr M."/>
            <person name="Kleber M."/>
            <person name="Mauceli E.W."/>
            <person name="Brockman W."/>
            <person name="MacCallum I.A."/>
            <person name="Rounsley S."/>
            <person name="Young S.K."/>
            <person name="LaButti K."/>
            <person name="Pushparaj V."/>
            <person name="DeCaprio D."/>
            <person name="Crawford M."/>
            <person name="Koehrsen M."/>
            <person name="Engels R."/>
            <person name="Montgomery P."/>
            <person name="Pearson M."/>
            <person name="Howarth C."/>
            <person name="Larson L."/>
            <person name="Luoma S."/>
            <person name="White J."/>
            <person name="O'Leary S."/>
            <person name="Kodira C.D."/>
            <person name="Zeng Q."/>
            <person name="Yandava C."/>
            <person name="Alvarado L."/>
            <person name="Pratt S."/>
            <person name="Kruglyak L."/>
        </authorList>
    </citation>
    <scope>NUCLEOTIDE SEQUENCE [LARGE SCALE GENOMIC DNA]</scope>
    <source>
        <strain>RM11-1a</strain>
    </source>
</reference>
<name>GET2_YEAS1</name>
<accession>B3LRK1</accession>
<keyword id="KW-0007">Acetylation</keyword>
<keyword id="KW-0256">Endoplasmic reticulum</keyword>
<keyword id="KW-0931">ER-Golgi transport</keyword>
<keyword id="KW-0325">Glycoprotein</keyword>
<keyword id="KW-0333">Golgi apparatus</keyword>
<keyword id="KW-0472">Membrane</keyword>
<keyword id="KW-0597">Phosphoprotein</keyword>
<keyword id="KW-0812">Transmembrane</keyword>
<keyword id="KW-1133">Transmembrane helix</keyword>
<keyword id="KW-0813">Transport</keyword>
<dbReference type="EMBL" id="CH408052">
    <property type="protein sequence ID" value="EDV08914.1"/>
    <property type="molecule type" value="Genomic_DNA"/>
</dbReference>
<dbReference type="SMR" id="B3LRK1"/>
<dbReference type="GlyCosmos" id="B3LRK1">
    <property type="glycosylation" value="2 sites, No reported glycans"/>
</dbReference>
<dbReference type="HOGENOM" id="CLU_066477_0_0_1"/>
<dbReference type="OrthoDB" id="6525at4893"/>
<dbReference type="Proteomes" id="UP000008335">
    <property type="component" value="Unassembled WGS sequence"/>
</dbReference>
<dbReference type="GO" id="GO:0005789">
    <property type="term" value="C:endoplasmic reticulum membrane"/>
    <property type="evidence" value="ECO:0007669"/>
    <property type="project" value="UniProtKB-SubCell"/>
</dbReference>
<dbReference type="GO" id="GO:0043529">
    <property type="term" value="C:GET complex"/>
    <property type="evidence" value="ECO:0007669"/>
    <property type="project" value="UniProtKB-UniRule"/>
</dbReference>
<dbReference type="GO" id="GO:0000139">
    <property type="term" value="C:Golgi membrane"/>
    <property type="evidence" value="ECO:0007669"/>
    <property type="project" value="UniProtKB-SubCell"/>
</dbReference>
<dbReference type="GO" id="GO:0045048">
    <property type="term" value="P:protein insertion into ER membrane"/>
    <property type="evidence" value="ECO:0007669"/>
    <property type="project" value="UniProtKB-UniRule"/>
</dbReference>
<dbReference type="GO" id="GO:0006890">
    <property type="term" value="P:retrograde vesicle-mediated transport, Golgi to endoplasmic reticulum"/>
    <property type="evidence" value="ECO:0007669"/>
    <property type="project" value="TreeGrafter"/>
</dbReference>
<dbReference type="HAMAP" id="MF_03114">
    <property type="entry name" value="Get2"/>
    <property type="match status" value="1"/>
</dbReference>
<dbReference type="InterPro" id="IPR014802">
    <property type="entry name" value="GET2"/>
</dbReference>
<dbReference type="InterPro" id="IPR028143">
    <property type="entry name" value="Get2/sif1"/>
</dbReference>
<dbReference type="PANTHER" id="PTHR28263">
    <property type="entry name" value="GOLGI TO ER TRAFFIC PROTEIN 2"/>
    <property type="match status" value="1"/>
</dbReference>
<dbReference type="PANTHER" id="PTHR28263:SF1">
    <property type="entry name" value="GOLGI TO ER TRAFFIC PROTEIN 2"/>
    <property type="match status" value="1"/>
</dbReference>
<dbReference type="Pfam" id="PF08690">
    <property type="entry name" value="GET2"/>
    <property type="match status" value="1"/>
</dbReference>
<sequence>MSELTEAEKRRLLRERRQKKFSNGGASSRLNKITGQASSHLNAESPLDAPSAAKTTPPASVHSATPDIKEDSNVAPQLDLLKQLAAMQGQGTGKSTPQDSSTPDLLSLLSSMNTGMPSAEGTPSFGQAAPAAPINQAALDYHDYLLNRLKAWTILVKWVFFLLPYLYLITRPNSSVWPAYAFTQSAWFAPLRNPSNFTRIFATFEFLSISIYYQLLKNVEHKSKIKNLQDTNKLVKLVSLVPEGVIPVANLKGKLITLLQYWDLLSMLITDISFVLIVLGLLTYL</sequence>
<gene>
    <name evidence="2" type="primary">GET2</name>
    <name evidence="2" type="synonym">HUR2</name>
    <name evidence="2" type="synonym">RMD7</name>
    <name type="ORF">SCRG_04560</name>
</gene>
<protein>
    <recommendedName>
        <fullName evidence="2">Golgi to ER traffic protein 2</fullName>
    </recommendedName>
    <alternativeName>
        <fullName evidence="2">Hydroxyurea resistance protein 2</fullName>
    </alternativeName>
    <alternativeName>
        <fullName evidence="2">Required for meiotic nuclear division protein 7</fullName>
    </alternativeName>
</protein>
<feature type="initiator methionine" description="Removed" evidence="1">
    <location>
        <position position="1"/>
    </location>
</feature>
<feature type="chain" id="PRO_0000388638" description="Golgi to ER traffic protein 2">
    <location>
        <begin position="2"/>
        <end position="285"/>
    </location>
</feature>
<feature type="topological domain" description="Cytoplasmic" evidence="2">
    <location>
        <begin position="2"/>
        <end position="148"/>
    </location>
</feature>
<feature type="transmembrane region" description="Helical" evidence="2">
    <location>
        <begin position="149"/>
        <end position="169"/>
    </location>
</feature>
<feature type="topological domain" description="Lumenal" evidence="2">
    <location>
        <begin position="170"/>
        <end position="196"/>
    </location>
</feature>
<feature type="transmembrane region" description="Helical" evidence="2">
    <location>
        <begin position="197"/>
        <end position="216"/>
    </location>
</feature>
<feature type="topological domain" description="Cytoplasmic" evidence="2">
    <location>
        <begin position="217"/>
        <end position="263"/>
    </location>
</feature>
<feature type="transmembrane region" description="Helical" evidence="2">
    <location>
        <begin position="264"/>
        <end position="284"/>
    </location>
</feature>
<feature type="topological domain" description="Lumenal" evidence="2">
    <location>
        <position position="285"/>
    </location>
</feature>
<feature type="region of interest" description="Disordered" evidence="3">
    <location>
        <begin position="1"/>
        <end position="72"/>
    </location>
</feature>
<feature type="region of interest" description="Disordered" evidence="3">
    <location>
        <begin position="87"/>
        <end position="106"/>
    </location>
</feature>
<feature type="compositionally biased region" description="Basic and acidic residues" evidence="3">
    <location>
        <begin position="1"/>
        <end position="10"/>
    </location>
</feature>
<feature type="compositionally biased region" description="Basic residues" evidence="3">
    <location>
        <begin position="11"/>
        <end position="20"/>
    </location>
</feature>
<feature type="compositionally biased region" description="Polar residues" evidence="3">
    <location>
        <begin position="24"/>
        <end position="42"/>
    </location>
</feature>
<feature type="compositionally biased region" description="Low complexity" evidence="3">
    <location>
        <begin position="49"/>
        <end position="60"/>
    </location>
</feature>
<feature type="compositionally biased region" description="Polar residues" evidence="3">
    <location>
        <begin position="93"/>
        <end position="104"/>
    </location>
</feature>
<feature type="modified residue" description="N-acetylserine" evidence="1">
    <location>
        <position position="2"/>
    </location>
</feature>
<feature type="modified residue" description="Phosphoserine" evidence="1">
    <location>
        <position position="45"/>
    </location>
</feature>
<feature type="glycosylation site" description="N-linked (GlcNAc...) asparagine" evidence="2">
    <location>
        <position position="173"/>
    </location>
</feature>
<feature type="glycosylation site" description="N-linked (GlcNAc...) asparagine" evidence="2">
    <location>
        <position position="196"/>
    </location>
</feature>
<organism>
    <name type="scientific">Saccharomyces cerevisiae (strain RM11-1a)</name>
    <name type="common">Baker's yeast</name>
    <dbReference type="NCBI Taxonomy" id="285006"/>
    <lineage>
        <taxon>Eukaryota</taxon>
        <taxon>Fungi</taxon>
        <taxon>Dikarya</taxon>
        <taxon>Ascomycota</taxon>
        <taxon>Saccharomycotina</taxon>
        <taxon>Saccharomycetes</taxon>
        <taxon>Saccharomycetales</taxon>
        <taxon>Saccharomycetaceae</taxon>
        <taxon>Saccharomyces</taxon>
    </lineage>
</organism>
<comment type="function">
    <text evidence="2">Required for the post-translational delivery of tail-anchored (TA) proteins to the endoplasmic reticulum. Together with GET1, acts as a membrane receptor for soluble GET3, which recognizes and selectively binds the transmembrane domain of TA proteins in the cytosol. The GET complex cooperates with the HDEL receptor ERD2 to mediate the ATP-dependent retrieval of resident ER proteins that contain a C-terminal H-D-E-L retention signal from the Golgi to the ER. Involved in DNA replication and DNA damage response and also in cell wall function.</text>
</comment>
<comment type="subunit">
    <text evidence="2">Component of the Golgi to ER traffic (GET) complex, which is composed of GET1, GET2 and GET3. Within the complex, GET1 and GET2 form a heterotetramer which is stabilized by phosphatidylinositol binding and which binds to the GET3 homodimer.</text>
</comment>
<comment type="subcellular location">
    <subcellularLocation>
        <location evidence="2">Endoplasmic reticulum membrane</location>
        <topology evidence="2">Multi-pass membrane protein</topology>
    </subcellularLocation>
    <subcellularLocation>
        <location evidence="2">Golgi apparatus membrane</location>
        <topology evidence="2">Multi-pass membrane protein</topology>
    </subcellularLocation>
</comment>
<comment type="similarity">
    <text evidence="2">Belongs to the GET2 family.</text>
</comment>
<proteinExistence type="inferred from homology"/>